<gene>
    <name type="primary">RLN</name>
</gene>
<evidence type="ECO:0000269" key="1">
    <source>
    </source>
</evidence>
<evidence type="ECO:0000269" key="2">
    <source>
    </source>
</evidence>
<evidence type="ECO:0000269" key="3">
    <source>
    </source>
</evidence>
<evidence type="ECO:0000269" key="4">
    <source>
    </source>
</evidence>
<evidence type="ECO:0000269" key="5">
    <source>
    </source>
</evidence>
<evidence type="ECO:0000269" key="6">
    <source>
    </source>
</evidence>
<evidence type="ECO:0000305" key="7"/>
<organism>
    <name type="scientific">Sus scrofa</name>
    <name type="common">Pig</name>
    <dbReference type="NCBI Taxonomy" id="9823"/>
    <lineage>
        <taxon>Eukaryota</taxon>
        <taxon>Metazoa</taxon>
        <taxon>Chordata</taxon>
        <taxon>Craniata</taxon>
        <taxon>Vertebrata</taxon>
        <taxon>Euteleostomi</taxon>
        <taxon>Mammalia</taxon>
        <taxon>Eutheria</taxon>
        <taxon>Laurasiatheria</taxon>
        <taxon>Artiodactyla</taxon>
        <taxon>Suina</taxon>
        <taxon>Suidae</taxon>
        <taxon>Sus</taxon>
    </lineage>
</organism>
<sequence>MPRLFSYLLGVWLLLSQLPREIPGQSTNDFIKACGRELVRLWVEICGSVSWGRTALSLEEPQLETGPPAETMPSSITKDAEILKMMLEFVPNLPQELKATLSERQPSLRELQQSASKDSNLNFEEFKKIILNRQNEAEDKSLLELKNLGLDKHSRKKRLFRMTLSEKCCQVGCIRKDIARLC</sequence>
<proteinExistence type="evidence at protein level"/>
<reference key="1">
    <citation type="journal article" date="1982" name="DNA">
        <title>Porcine relaxin: molecular cloning and cDNA structure.</title>
        <authorList>
            <person name="Haley J."/>
            <person name="Hudson P."/>
            <person name="Scanlon D."/>
            <person name="John M."/>
            <person name="Cronk M."/>
            <person name="Shine J."/>
            <person name="Tregear G."/>
            <person name="Niall H."/>
        </authorList>
    </citation>
    <scope>NUCLEOTIDE SEQUENCE [MRNA]</scope>
</reference>
<reference key="2">
    <citation type="journal article" date="1987" name="J. Biol. Chem.">
        <title>Porcine relaxin. Gene structure and expression.</title>
        <authorList>
            <person name="Haley J."/>
            <person name="Crawford R."/>
            <person name="Hudson P."/>
            <person name="Scanlon D."/>
            <person name="Tregear G."/>
            <person name="Shine J."/>
            <person name="Niall H."/>
        </authorList>
    </citation>
    <scope>NUCLEOTIDE SEQUENCE [GENOMIC DNA]</scope>
</reference>
<reference key="3">
    <citation type="journal article" date="1977" name="Nature">
        <title>Primary structure of porcine relaxin: homology with insulin and related growth factors.</title>
        <authorList>
            <person name="James R."/>
            <person name="Niall H."/>
            <person name="Kwok S."/>
            <person name="Bryant-Greenwood G."/>
        </authorList>
    </citation>
    <scope>PRELIMINARY PROTEIN SEQUENCE OF 25-54 AND 161-182</scope>
</reference>
<reference key="4">
    <citation type="journal article" date="1977" name="Biochem. Biophys. Res. Commun.">
        <title>Primary structure of the B-chain of porcine relaxin.</title>
        <authorList>
            <person name="Schwabe C."/>
            <person name="McDonald J.K."/>
            <person name="Steinetz B.G."/>
        </authorList>
    </citation>
    <scope>PROTEIN SEQUENCE OF 25-51</scope>
</reference>
<reference key="5">
    <citation type="journal article" date="1977" name="Biochem. Biophys. Res. Commun.">
        <title>Demonstration of a pyroglutamyl residue at the N-terminus of the B-chain of porcine relaxin.</title>
        <authorList>
            <person name="Schwabe C."/>
            <person name="McDonald J.K."/>
        </authorList>
    </citation>
    <scope>PYROGLUTAMATE FORMATION AT GLN-25</scope>
</reference>
<reference key="6">
    <citation type="journal article" date="1976" name="Biochem. Biophys. Res. Commun.">
        <title>Primary structure of the A chain of porcine relaxin.</title>
        <authorList>
            <person name="Schwabe C."/>
            <person name="McDonald J.K."/>
            <person name="Steinetz B.G."/>
        </authorList>
    </citation>
    <scope>PROTEIN SEQUENCE OF 161-182</scope>
</reference>
<reference key="7">
    <citation type="journal article" date="1977" name="Science">
        <title>Relaxin: a disulfide homolog of insulin.</title>
        <authorList>
            <person name="Schwabe C."/>
            <person name="McDonald J.K."/>
        </authorList>
    </citation>
    <scope>DISULFIDE BONDS</scope>
</reference>
<reference key="8">
    <citation type="journal article" date="1978" name="Nature">
        <title>Relaxin and its structural relationship to insulin.</title>
        <authorList>
            <person name="Isaacs N.W."/>
            <person name="James R."/>
            <person name="Niall H."/>
            <person name="Bryant-Greenwood G."/>
            <person name="Dodson G.G."/>
            <person name="Evans A."/>
            <person name="North A.C.T."/>
        </authorList>
    </citation>
    <scope>3D-STRUCTURE MODELING</scope>
</reference>
<feature type="signal peptide" evidence="3">
    <location>
        <begin position="1"/>
        <end position="24"/>
    </location>
</feature>
<feature type="peptide" id="PRO_0000016112" description="Relaxin B chain" evidence="1">
    <location>
        <begin position="25"/>
        <end position="56"/>
    </location>
</feature>
<feature type="propeptide" id="PRO_0000016113" description="Connecting peptide">
    <location>
        <begin position="57"/>
        <end position="154"/>
    </location>
</feature>
<feature type="propeptide" id="PRO_0000016114" evidence="6">
    <location>
        <begin position="159"/>
        <end position="160"/>
    </location>
</feature>
<feature type="peptide" id="PRO_0000016115" description="Relaxin A chain" evidence="1">
    <location>
        <begin position="161"/>
        <end position="182"/>
    </location>
</feature>
<feature type="modified residue" description="Pyrrolidone carboxylic acid" evidence="2 4">
    <location>
        <position position="25"/>
    </location>
</feature>
<feature type="disulfide bond" description="Interchain (between B and A chains)" evidence="5">
    <location>
        <begin position="34"/>
        <end position="169"/>
    </location>
</feature>
<feature type="disulfide bond" description="Interchain (between B and A chains)" evidence="5">
    <location>
        <begin position="46"/>
        <end position="182"/>
    </location>
</feature>
<feature type="disulfide bond" evidence="5">
    <location>
        <begin position="168"/>
        <end position="173"/>
    </location>
</feature>
<feature type="sequence conflict" description="In Ref. 4; AA sequence." evidence="7" ref="4">
    <original>G</original>
    <variation>GVWS</variation>
    <location>
        <position position="47"/>
    </location>
</feature>
<feature type="sequence conflict" description="In Ref. 3; AA sequence." evidence="7" ref="3">
    <original>WGRT</original>
    <variation>TWGR</variation>
    <location>
        <begin position="51"/>
        <end position="54"/>
    </location>
</feature>
<feature type="sequence conflict" description="In Ref. 2; AAA31115." evidence="7" ref="2">
    <original>S</original>
    <variation>L</variation>
    <location>
        <position position="116"/>
    </location>
</feature>
<feature type="sequence conflict" description="In Ref. 6; AA sequence." evidence="7" ref="6">
    <original>Q</original>
    <variation>E</variation>
    <location>
        <position position="170"/>
    </location>
</feature>
<protein>
    <recommendedName>
        <fullName>Prorelaxin</fullName>
    </recommendedName>
    <component>
        <recommendedName>
            <fullName>Relaxin B chain</fullName>
        </recommendedName>
    </component>
    <component>
        <recommendedName>
            <fullName>Relaxin A chain</fullName>
        </recommendedName>
    </component>
</protein>
<accession>P01348</accession>
<keyword id="KW-0165">Cleavage on pair of basic residues</keyword>
<keyword id="KW-0903">Direct protein sequencing</keyword>
<keyword id="KW-1015">Disulfide bond</keyword>
<keyword id="KW-0372">Hormone</keyword>
<keyword id="KW-0873">Pyrrolidone carboxylic acid</keyword>
<keyword id="KW-1185">Reference proteome</keyword>
<keyword id="KW-0964">Secreted</keyword>
<keyword id="KW-0732">Signal</keyword>
<name>RELX_PIG</name>
<dbReference type="EMBL" id="K01088">
    <property type="protein sequence ID" value="AAA31114.1"/>
    <property type="molecule type" value="mRNA"/>
</dbReference>
<dbReference type="EMBL" id="J02792">
    <property type="protein sequence ID" value="AAA31115.1"/>
    <property type="molecule type" value="Genomic_DNA"/>
</dbReference>
<dbReference type="PIR" id="A90934">
    <property type="entry name" value="RXPG"/>
</dbReference>
<dbReference type="RefSeq" id="NP_999037.1">
    <property type="nucleotide sequence ID" value="NM_213872.1"/>
</dbReference>
<dbReference type="SMR" id="P01348"/>
<dbReference type="FunCoup" id="P01348">
    <property type="interactions" value="20"/>
</dbReference>
<dbReference type="MINT" id="P01348"/>
<dbReference type="STRING" id="9823.ENSSSCP00000005607"/>
<dbReference type="PaxDb" id="9823-ENSSSCP00000005607"/>
<dbReference type="GeneID" id="396891"/>
<dbReference type="KEGG" id="ssc:396891"/>
<dbReference type="CTD" id="6019"/>
<dbReference type="eggNOG" id="ENOG502TH8D">
    <property type="taxonomic scope" value="Eukaryota"/>
</dbReference>
<dbReference type="InParanoid" id="P01348"/>
<dbReference type="OrthoDB" id="8784777at2759"/>
<dbReference type="Proteomes" id="UP000008227">
    <property type="component" value="Unplaced"/>
</dbReference>
<dbReference type="Proteomes" id="UP000314985">
    <property type="component" value="Unplaced"/>
</dbReference>
<dbReference type="Proteomes" id="UP000694570">
    <property type="component" value="Unplaced"/>
</dbReference>
<dbReference type="Proteomes" id="UP000694571">
    <property type="component" value="Unplaced"/>
</dbReference>
<dbReference type="Proteomes" id="UP000694720">
    <property type="component" value="Unplaced"/>
</dbReference>
<dbReference type="Proteomes" id="UP000694722">
    <property type="component" value="Unplaced"/>
</dbReference>
<dbReference type="Proteomes" id="UP000694723">
    <property type="component" value="Unplaced"/>
</dbReference>
<dbReference type="Proteomes" id="UP000694724">
    <property type="component" value="Unplaced"/>
</dbReference>
<dbReference type="Proteomes" id="UP000694725">
    <property type="component" value="Unplaced"/>
</dbReference>
<dbReference type="Proteomes" id="UP000694726">
    <property type="component" value="Unplaced"/>
</dbReference>
<dbReference type="Proteomes" id="UP000694727">
    <property type="component" value="Unplaced"/>
</dbReference>
<dbReference type="Proteomes" id="UP000694728">
    <property type="component" value="Unplaced"/>
</dbReference>
<dbReference type="GO" id="GO:0005576">
    <property type="term" value="C:extracellular region"/>
    <property type="evidence" value="ECO:0007669"/>
    <property type="project" value="UniProtKB-SubCell"/>
</dbReference>
<dbReference type="GO" id="GO:0005179">
    <property type="term" value="F:hormone activity"/>
    <property type="evidence" value="ECO:0007669"/>
    <property type="project" value="UniProtKB-KW"/>
</dbReference>
<dbReference type="GO" id="GO:0001832">
    <property type="term" value="P:blastocyst growth"/>
    <property type="evidence" value="ECO:0000314"/>
    <property type="project" value="CACAO"/>
</dbReference>
<dbReference type="GO" id="GO:0030317">
    <property type="term" value="P:flagellated sperm motility"/>
    <property type="evidence" value="ECO:0000314"/>
    <property type="project" value="CACAO"/>
</dbReference>
<dbReference type="GO" id="GO:0001556">
    <property type="term" value="P:oocyte maturation"/>
    <property type="evidence" value="ECO:0000314"/>
    <property type="project" value="CACAO"/>
</dbReference>
<dbReference type="GO" id="GO:2000344">
    <property type="term" value="P:positive regulation of acrosome reaction"/>
    <property type="evidence" value="ECO:0000314"/>
    <property type="project" value="CACAO"/>
</dbReference>
<dbReference type="GO" id="GO:0046326">
    <property type="term" value="P:positive regulation of D-glucose import"/>
    <property type="evidence" value="ECO:0000314"/>
    <property type="project" value="CACAO"/>
</dbReference>
<dbReference type="GO" id="GO:0050679">
    <property type="term" value="P:positive regulation of epithelial cell proliferation"/>
    <property type="evidence" value="ECO:0000314"/>
    <property type="project" value="CACAO"/>
</dbReference>
<dbReference type="CDD" id="cd04365">
    <property type="entry name" value="IlGF_relaxin_like"/>
    <property type="match status" value="1"/>
</dbReference>
<dbReference type="InterPro" id="IPR016179">
    <property type="entry name" value="Insulin-like"/>
</dbReference>
<dbReference type="InterPro" id="IPR036438">
    <property type="entry name" value="Insulin-like_sf"/>
</dbReference>
<dbReference type="InterPro" id="IPR022353">
    <property type="entry name" value="Insulin_CS"/>
</dbReference>
<dbReference type="InterPro" id="IPR022421">
    <property type="entry name" value="Relaxin"/>
</dbReference>
<dbReference type="InterPro" id="IPR051042">
    <property type="entry name" value="Repro_Hormone_Insulin-like"/>
</dbReference>
<dbReference type="PANTHER" id="PTHR12004:SF13">
    <property type="entry name" value="PRORELAXIN H2"/>
    <property type="match status" value="1"/>
</dbReference>
<dbReference type="PANTHER" id="PTHR12004">
    <property type="entry name" value="RELAXIN"/>
    <property type="match status" value="1"/>
</dbReference>
<dbReference type="Pfam" id="PF00049">
    <property type="entry name" value="Insulin"/>
    <property type="match status" value="1"/>
</dbReference>
<dbReference type="PRINTS" id="PR02004">
    <property type="entry name" value="RELAXIN"/>
</dbReference>
<dbReference type="SMART" id="SM00078">
    <property type="entry name" value="IlGF"/>
    <property type="match status" value="1"/>
</dbReference>
<dbReference type="SUPFAM" id="SSF56994">
    <property type="entry name" value="Insulin-like"/>
    <property type="match status" value="1"/>
</dbReference>
<dbReference type="PROSITE" id="PS00262">
    <property type="entry name" value="INSULIN"/>
    <property type="match status" value="1"/>
</dbReference>
<comment type="function">
    <text>Relaxin is an ovarian hormone that acts with estrogen to produce dilatation of the birth canal in many mammals.</text>
</comment>
<comment type="subunit">
    <text>Heterodimer of a B chain and an A chain linked by two disulfide bonds.</text>
</comment>
<comment type="subcellular location">
    <subcellularLocation>
        <location>Secreted</location>
    </subcellularLocation>
</comment>
<comment type="similarity">
    <text evidence="7">Belongs to the insulin family.</text>
</comment>